<protein>
    <recommendedName>
        <fullName>Mitochondrial inner membrane protease atp23</fullName>
        <ecNumber>3.4.24.-</ecNumber>
    </recommendedName>
</protein>
<sequence length="238" mass="27856">MPESQPSSTSEPRVSAHNNGCLPGDDIWTQWRNIFAILTGKMSDEGIEQFRVARDIRNEAADCKRCEDQRDYLLQWSPVIRYLSDNIRQLGGDLSSHNIYCRRCTNRKAGGFDPDFGILLCANEMKDQGHLEDTMAHEMVHAYDHLRFKVDWADNLRHAACTEVLKTSLSGECRWAREFFRRGQWRFTQQHQECVKRRAILSVRARPTCKDEAHAERVVNEVWDSCFRDTRPFDEIYR</sequence>
<reference key="1">
    <citation type="journal article" date="2005" name="Nature">
        <title>Genome sequencing and analysis of Aspergillus oryzae.</title>
        <authorList>
            <person name="Machida M."/>
            <person name="Asai K."/>
            <person name="Sano M."/>
            <person name="Tanaka T."/>
            <person name="Kumagai T."/>
            <person name="Terai G."/>
            <person name="Kusumoto K."/>
            <person name="Arima T."/>
            <person name="Akita O."/>
            <person name="Kashiwagi Y."/>
            <person name="Abe K."/>
            <person name="Gomi K."/>
            <person name="Horiuchi H."/>
            <person name="Kitamoto K."/>
            <person name="Kobayashi T."/>
            <person name="Takeuchi M."/>
            <person name="Denning D.W."/>
            <person name="Galagan J.E."/>
            <person name="Nierman W.C."/>
            <person name="Yu J."/>
            <person name="Archer D.B."/>
            <person name="Bennett J.W."/>
            <person name="Bhatnagar D."/>
            <person name="Cleveland T.E."/>
            <person name="Fedorova N.D."/>
            <person name="Gotoh O."/>
            <person name="Horikawa H."/>
            <person name="Hosoyama A."/>
            <person name="Ichinomiya M."/>
            <person name="Igarashi R."/>
            <person name="Iwashita K."/>
            <person name="Juvvadi P.R."/>
            <person name="Kato M."/>
            <person name="Kato Y."/>
            <person name="Kin T."/>
            <person name="Kokubun A."/>
            <person name="Maeda H."/>
            <person name="Maeyama N."/>
            <person name="Maruyama J."/>
            <person name="Nagasaki H."/>
            <person name="Nakajima T."/>
            <person name="Oda K."/>
            <person name="Okada K."/>
            <person name="Paulsen I."/>
            <person name="Sakamoto K."/>
            <person name="Sawano T."/>
            <person name="Takahashi M."/>
            <person name="Takase K."/>
            <person name="Terabayashi Y."/>
            <person name="Wortman J.R."/>
            <person name="Yamada O."/>
            <person name="Yamagata Y."/>
            <person name="Anazawa H."/>
            <person name="Hata Y."/>
            <person name="Koide Y."/>
            <person name="Komori T."/>
            <person name="Koyama Y."/>
            <person name="Minetoki T."/>
            <person name="Suharnan S."/>
            <person name="Tanaka A."/>
            <person name="Isono K."/>
            <person name="Kuhara S."/>
            <person name="Ogasawara N."/>
            <person name="Kikuchi H."/>
        </authorList>
    </citation>
    <scope>NUCLEOTIDE SEQUENCE [LARGE SCALE GENOMIC DNA]</scope>
    <source>
        <strain>ATCC 42149 / RIB 40</strain>
    </source>
</reference>
<name>ATP23_ASPOR</name>
<comment type="function">
    <text evidence="1">Has a dual role in the assembly of mitochondrial ATPase. Acts as a protease that removes N-terminal residues of mitochondrial ATPase CF(0) subunit 6 at the intermembrane space side. Also involved in the correct assembly of the membrane-embedded ATPase CF(0) particle, probably mediating association of subunit 6 with the subunit 9 ring (By similarity).</text>
</comment>
<comment type="subcellular location">
    <subcellularLocation>
        <location>Mitochondrion inner membrane</location>
        <topology>Peripheral membrane protein</topology>
        <orientation>Intermembrane side</orientation>
    </subcellularLocation>
    <text evidence="1">Associates loosely with the inner membrane.</text>
</comment>
<comment type="similarity">
    <text evidence="3">Belongs to the peptidase M76 family.</text>
</comment>
<comment type="sequence caution" evidence="3">
    <conflict type="erroneous initiation">
        <sequence resource="EMBL-CDS" id="BAE65362"/>
    </conflict>
</comment>
<gene>
    <name type="primary">atp23</name>
    <name type="ORF">AO090011000936</name>
</gene>
<keyword id="KW-0378">Hydrolase</keyword>
<keyword id="KW-0472">Membrane</keyword>
<keyword id="KW-0479">Metal-binding</keyword>
<keyword id="KW-0482">Metalloprotease</keyword>
<keyword id="KW-0496">Mitochondrion</keyword>
<keyword id="KW-0999">Mitochondrion inner membrane</keyword>
<keyword id="KW-0645">Protease</keyword>
<keyword id="KW-1185">Reference proteome</keyword>
<evidence type="ECO:0000250" key="1"/>
<evidence type="ECO:0000255" key="2">
    <source>
        <dbReference type="PROSITE-ProRule" id="PRU10095"/>
    </source>
</evidence>
<evidence type="ECO:0000305" key="3"/>
<organism>
    <name type="scientific">Aspergillus oryzae (strain ATCC 42149 / RIB 40)</name>
    <name type="common">Yellow koji mold</name>
    <dbReference type="NCBI Taxonomy" id="510516"/>
    <lineage>
        <taxon>Eukaryota</taxon>
        <taxon>Fungi</taxon>
        <taxon>Dikarya</taxon>
        <taxon>Ascomycota</taxon>
        <taxon>Pezizomycotina</taxon>
        <taxon>Eurotiomycetes</taxon>
        <taxon>Eurotiomycetidae</taxon>
        <taxon>Eurotiales</taxon>
        <taxon>Aspergillaceae</taxon>
        <taxon>Aspergillus</taxon>
        <taxon>Aspergillus subgen. Circumdati</taxon>
    </lineage>
</organism>
<proteinExistence type="inferred from homology"/>
<feature type="chain" id="PRO_0000330055" description="Mitochondrial inner membrane protease atp23">
    <location>
        <begin position="1"/>
        <end position="238"/>
    </location>
</feature>
<feature type="active site" evidence="2">
    <location>
        <position position="138"/>
    </location>
</feature>
<feature type="binding site" evidence="1">
    <location>
        <position position="137"/>
    </location>
    <ligand>
        <name>a divalent metal cation</name>
        <dbReference type="ChEBI" id="CHEBI:60240"/>
        <note>catalytic</note>
    </ligand>
</feature>
<feature type="binding site" evidence="1">
    <location>
        <position position="141"/>
    </location>
    <ligand>
        <name>a divalent metal cation</name>
        <dbReference type="ChEBI" id="CHEBI:60240"/>
        <note>catalytic</note>
    </ligand>
</feature>
<dbReference type="EC" id="3.4.24.-"/>
<dbReference type="EMBL" id="BA000055">
    <property type="protein sequence ID" value="BAE65362.1"/>
    <property type="status" value="ALT_INIT"/>
    <property type="molecule type" value="Genomic_DNA"/>
</dbReference>
<dbReference type="STRING" id="510516.Q2TZA3"/>
<dbReference type="MEROPS" id="M76.002"/>
<dbReference type="EnsemblFungi" id="BAE65362">
    <property type="protein sequence ID" value="BAE65362"/>
    <property type="gene ID" value="AO090011000936"/>
</dbReference>
<dbReference type="Proteomes" id="UP000006564">
    <property type="component" value="Chromosome 7"/>
</dbReference>
<dbReference type="GO" id="GO:0005743">
    <property type="term" value="C:mitochondrial inner membrane"/>
    <property type="evidence" value="ECO:0007669"/>
    <property type="project" value="UniProtKB-SubCell"/>
</dbReference>
<dbReference type="GO" id="GO:0046872">
    <property type="term" value="F:metal ion binding"/>
    <property type="evidence" value="ECO:0007669"/>
    <property type="project" value="UniProtKB-KW"/>
</dbReference>
<dbReference type="GO" id="GO:0004222">
    <property type="term" value="F:metalloendopeptidase activity"/>
    <property type="evidence" value="ECO:0007669"/>
    <property type="project" value="InterPro"/>
</dbReference>
<dbReference type="GO" id="GO:0034982">
    <property type="term" value="P:mitochondrial protein processing"/>
    <property type="evidence" value="ECO:0007669"/>
    <property type="project" value="TreeGrafter"/>
</dbReference>
<dbReference type="GO" id="GO:0033615">
    <property type="term" value="P:mitochondrial proton-transporting ATP synthase complex assembly"/>
    <property type="evidence" value="ECO:0007669"/>
    <property type="project" value="TreeGrafter"/>
</dbReference>
<dbReference type="InterPro" id="IPR019165">
    <property type="entry name" value="Peptidase_M76_ATP23"/>
</dbReference>
<dbReference type="PANTHER" id="PTHR21711">
    <property type="entry name" value="MITOCHONDRIAL INNER MEMBRANE PROTEASE"/>
    <property type="match status" value="1"/>
</dbReference>
<dbReference type="PANTHER" id="PTHR21711:SF0">
    <property type="entry name" value="MITOCHONDRIAL INNER MEMBRANE PROTEASE ATP23 HOMOLOG"/>
    <property type="match status" value="1"/>
</dbReference>
<dbReference type="Pfam" id="PF09768">
    <property type="entry name" value="Peptidase_M76"/>
    <property type="match status" value="1"/>
</dbReference>
<dbReference type="PROSITE" id="PS00142">
    <property type="entry name" value="ZINC_PROTEASE"/>
    <property type="match status" value="1"/>
</dbReference>
<accession>Q2TZA3</accession>